<protein>
    <recommendedName>
        <fullName evidence="1">2-C-methyl-D-erythritol 2,4-cyclodiphosphate synthase</fullName>
        <shortName evidence="1">MECDP-synthase</shortName>
        <shortName evidence="1">MECPP-synthase</shortName>
        <shortName evidence="1">MECPS</shortName>
        <ecNumber evidence="1">4.6.1.12</ecNumber>
    </recommendedName>
</protein>
<accession>B1JJF7</accession>
<gene>
    <name evidence="1" type="primary">ispF</name>
    <name type="ordered locus">YPK_3430</name>
</gene>
<keyword id="KW-0414">Isoprene biosynthesis</keyword>
<keyword id="KW-0456">Lyase</keyword>
<keyword id="KW-0479">Metal-binding</keyword>
<sequence length="162" mass="17182">MRIGHGFDVHKFGENGSGPLIIGGVRIPYEKGLLAHSDGDVALHAATDALLGAAALGDIGKLFPDTDPAFKGADSRGLLREAYRRILAKGYKLGNLDITIIAQAPKMAPHIPQMRVNLAEDLQCHMDDINVKATTTEQLGFTGRGEGIACEAVVLLVNVEQG</sequence>
<evidence type="ECO:0000255" key="1">
    <source>
        <dbReference type="HAMAP-Rule" id="MF_00107"/>
    </source>
</evidence>
<reference key="1">
    <citation type="submission" date="2008-02" db="EMBL/GenBank/DDBJ databases">
        <title>Complete sequence of Yersinia pseudotuberculosis YPIII.</title>
        <authorList>
            <consortium name="US DOE Joint Genome Institute"/>
            <person name="Copeland A."/>
            <person name="Lucas S."/>
            <person name="Lapidus A."/>
            <person name="Glavina del Rio T."/>
            <person name="Dalin E."/>
            <person name="Tice H."/>
            <person name="Bruce D."/>
            <person name="Goodwin L."/>
            <person name="Pitluck S."/>
            <person name="Munk A.C."/>
            <person name="Brettin T."/>
            <person name="Detter J.C."/>
            <person name="Han C."/>
            <person name="Tapia R."/>
            <person name="Schmutz J."/>
            <person name="Larimer F."/>
            <person name="Land M."/>
            <person name="Hauser L."/>
            <person name="Challacombe J.F."/>
            <person name="Green L."/>
            <person name="Lindler L.E."/>
            <person name="Nikolich M.P."/>
            <person name="Richardson P."/>
        </authorList>
    </citation>
    <scope>NUCLEOTIDE SEQUENCE [LARGE SCALE GENOMIC DNA]</scope>
    <source>
        <strain>YPIII</strain>
    </source>
</reference>
<comment type="function">
    <text evidence="1">Involved in the biosynthesis of isopentenyl diphosphate (IPP) and dimethylallyl diphosphate (DMAPP), two major building blocks of isoprenoid compounds. Catalyzes the conversion of 4-diphosphocytidyl-2-C-methyl-D-erythritol 2-phosphate (CDP-ME2P) to 2-C-methyl-D-erythritol 2,4-cyclodiphosphate (ME-CPP) with a corresponding release of cytidine 5-monophosphate (CMP).</text>
</comment>
<comment type="catalytic activity">
    <reaction evidence="1">
        <text>4-CDP-2-C-methyl-D-erythritol 2-phosphate = 2-C-methyl-D-erythritol 2,4-cyclic diphosphate + CMP</text>
        <dbReference type="Rhea" id="RHEA:23864"/>
        <dbReference type="ChEBI" id="CHEBI:57919"/>
        <dbReference type="ChEBI" id="CHEBI:58483"/>
        <dbReference type="ChEBI" id="CHEBI:60377"/>
        <dbReference type="EC" id="4.6.1.12"/>
    </reaction>
</comment>
<comment type="cofactor">
    <cofactor evidence="1">
        <name>a divalent metal cation</name>
        <dbReference type="ChEBI" id="CHEBI:60240"/>
    </cofactor>
    <text evidence="1">Binds 1 divalent metal cation per subunit.</text>
</comment>
<comment type="pathway">
    <text evidence="1">Isoprenoid biosynthesis; isopentenyl diphosphate biosynthesis via DXP pathway; isopentenyl diphosphate from 1-deoxy-D-xylulose 5-phosphate: step 4/6.</text>
</comment>
<comment type="subunit">
    <text evidence="1">Homotrimer.</text>
</comment>
<comment type="similarity">
    <text evidence="1">Belongs to the IspF family.</text>
</comment>
<organism>
    <name type="scientific">Yersinia pseudotuberculosis serotype O:3 (strain YPIII)</name>
    <dbReference type="NCBI Taxonomy" id="502800"/>
    <lineage>
        <taxon>Bacteria</taxon>
        <taxon>Pseudomonadati</taxon>
        <taxon>Pseudomonadota</taxon>
        <taxon>Gammaproteobacteria</taxon>
        <taxon>Enterobacterales</taxon>
        <taxon>Yersiniaceae</taxon>
        <taxon>Yersinia</taxon>
    </lineage>
</organism>
<feature type="chain" id="PRO_1000094300" description="2-C-methyl-D-erythritol 2,4-cyclodiphosphate synthase">
    <location>
        <begin position="1"/>
        <end position="162"/>
    </location>
</feature>
<feature type="binding site" evidence="1">
    <location>
        <begin position="8"/>
        <end position="10"/>
    </location>
    <ligand>
        <name>4-CDP-2-C-methyl-D-erythritol 2-phosphate</name>
        <dbReference type="ChEBI" id="CHEBI:57919"/>
    </ligand>
</feature>
<feature type="binding site" evidence="1">
    <location>
        <position position="8"/>
    </location>
    <ligand>
        <name>a divalent metal cation</name>
        <dbReference type="ChEBI" id="CHEBI:60240"/>
    </ligand>
</feature>
<feature type="binding site" evidence="1">
    <location>
        <position position="10"/>
    </location>
    <ligand>
        <name>a divalent metal cation</name>
        <dbReference type="ChEBI" id="CHEBI:60240"/>
    </ligand>
</feature>
<feature type="binding site" evidence="1">
    <location>
        <begin position="36"/>
        <end position="37"/>
    </location>
    <ligand>
        <name>4-CDP-2-C-methyl-D-erythritol 2-phosphate</name>
        <dbReference type="ChEBI" id="CHEBI:57919"/>
    </ligand>
</feature>
<feature type="binding site" evidence="1">
    <location>
        <position position="44"/>
    </location>
    <ligand>
        <name>a divalent metal cation</name>
        <dbReference type="ChEBI" id="CHEBI:60240"/>
    </ligand>
</feature>
<feature type="binding site" evidence="1">
    <location>
        <begin position="58"/>
        <end position="60"/>
    </location>
    <ligand>
        <name>4-CDP-2-C-methyl-D-erythritol 2-phosphate</name>
        <dbReference type="ChEBI" id="CHEBI:57919"/>
    </ligand>
</feature>
<feature type="binding site" evidence="1">
    <location>
        <begin position="63"/>
        <end position="67"/>
    </location>
    <ligand>
        <name>4-CDP-2-C-methyl-D-erythritol 2-phosphate</name>
        <dbReference type="ChEBI" id="CHEBI:57919"/>
    </ligand>
</feature>
<feature type="binding site" evidence="1">
    <location>
        <begin position="102"/>
        <end position="108"/>
    </location>
    <ligand>
        <name>4-CDP-2-C-methyl-D-erythritol 2-phosphate</name>
        <dbReference type="ChEBI" id="CHEBI:57919"/>
    </ligand>
</feature>
<feature type="binding site" evidence="1">
    <location>
        <begin position="134"/>
        <end position="137"/>
    </location>
    <ligand>
        <name>4-CDP-2-C-methyl-D-erythritol 2-phosphate</name>
        <dbReference type="ChEBI" id="CHEBI:57919"/>
    </ligand>
</feature>
<feature type="binding site" evidence="1">
    <location>
        <position position="141"/>
    </location>
    <ligand>
        <name>4-CDP-2-C-methyl-D-erythritol 2-phosphate</name>
        <dbReference type="ChEBI" id="CHEBI:57919"/>
    </ligand>
</feature>
<feature type="binding site" evidence="1">
    <location>
        <position position="144"/>
    </location>
    <ligand>
        <name>4-CDP-2-C-methyl-D-erythritol 2-phosphate</name>
        <dbReference type="ChEBI" id="CHEBI:57919"/>
    </ligand>
</feature>
<feature type="site" description="Transition state stabilizer" evidence="1">
    <location>
        <position position="36"/>
    </location>
</feature>
<feature type="site" description="Transition state stabilizer" evidence="1">
    <location>
        <position position="135"/>
    </location>
</feature>
<proteinExistence type="inferred from homology"/>
<name>ISPF_YERPY</name>
<dbReference type="EC" id="4.6.1.12" evidence="1"/>
<dbReference type="EMBL" id="CP000950">
    <property type="protein sequence ID" value="ACA69697.1"/>
    <property type="molecule type" value="Genomic_DNA"/>
</dbReference>
<dbReference type="RefSeq" id="WP_002209392.1">
    <property type="nucleotide sequence ID" value="NZ_CP009792.1"/>
</dbReference>
<dbReference type="SMR" id="B1JJF7"/>
<dbReference type="GeneID" id="96664269"/>
<dbReference type="KEGG" id="ypy:YPK_3430"/>
<dbReference type="PATRIC" id="fig|502800.11.peg.4168"/>
<dbReference type="UniPathway" id="UPA00056">
    <property type="reaction ID" value="UER00095"/>
</dbReference>
<dbReference type="GO" id="GO:0008685">
    <property type="term" value="F:2-C-methyl-D-erythritol 2,4-cyclodiphosphate synthase activity"/>
    <property type="evidence" value="ECO:0007669"/>
    <property type="project" value="UniProtKB-UniRule"/>
</dbReference>
<dbReference type="GO" id="GO:0046872">
    <property type="term" value="F:metal ion binding"/>
    <property type="evidence" value="ECO:0007669"/>
    <property type="project" value="UniProtKB-KW"/>
</dbReference>
<dbReference type="GO" id="GO:0019288">
    <property type="term" value="P:isopentenyl diphosphate biosynthetic process, methylerythritol 4-phosphate pathway"/>
    <property type="evidence" value="ECO:0007669"/>
    <property type="project" value="UniProtKB-UniRule"/>
</dbReference>
<dbReference type="GO" id="GO:0016114">
    <property type="term" value="P:terpenoid biosynthetic process"/>
    <property type="evidence" value="ECO:0007669"/>
    <property type="project" value="InterPro"/>
</dbReference>
<dbReference type="CDD" id="cd00554">
    <property type="entry name" value="MECDP_synthase"/>
    <property type="match status" value="1"/>
</dbReference>
<dbReference type="FunFam" id="3.30.1330.50:FF:000001">
    <property type="entry name" value="2-C-methyl-D-erythritol 2,4-cyclodiphosphate synthase"/>
    <property type="match status" value="1"/>
</dbReference>
<dbReference type="Gene3D" id="3.30.1330.50">
    <property type="entry name" value="2-C-methyl-D-erythritol 2,4-cyclodiphosphate synthase"/>
    <property type="match status" value="1"/>
</dbReference>
<dbReference type="HAMAP" id="MF_00107">
    <property type="entry name" value="IspF"/>
    <property type="match status" value="1"/>
</dbReference>
<dbReference type="InterPro" id="IPR003526">
    <property type="entry name" value="MECDP_synthase"/>
</dbReference>
<dbReference type="InterPro" id="IPR020555">
    <property type="entry name" value="MECDP_synthase_CS"/>
</dbReference>
<dbReference type="InterPro" id="IPR036571">
    <property type="entry name" value="MECDP_synthase_sf"/>
</dbReference>
<dbReference type="NCBIfam" id="TIGR00151">
    <property type="entry name" value="ispF"/>
    <property type="match status" value="1"/>
</dbReference>
<dbReference type="PANTHER" id="PTHR43181">
    <property type="entry name" value="2-C-METHYL-D-ERYTHRITOL 2,4-CYCLODIPHOSPHATE SYNTHASE, CHLOROPLASTIC"/>
    <property type="match status" value="1"/>
</dbReference>
<dbReference type="PANTHER" id="PTHR43181:SF1">
    <property type="entry name" value="2-C-METHYL-D-ERYTHRITOL 2,4-CYCLODIPHOSPHATE SYNTHASE, CHLOROPLASTIC"/>
    <property type="match status" value="1"/>
</dbReference>
<dbReference type="Pfam" id="PF02542">
    <property type="entry name" value="YgbB"/>
    <property type="match status" value="1"/>
</dbReference>
<dbReference type="SUPFAM" id="SSF69765">
    <property type="entry name" value="IpsF-like"/>
    <property type="match status" value="1"/>
</dbReference>
<dbReference type="PROSITE" id="PS01350">
    <property type="entry name" value="ISPF"/>
    <property type="match status" value="1"/>
</dbReference>